<dbReference type="EC" id="2.3.1.225" evidence="1"/>
<dbReference type="EMBL" id="CP003821">
    <property type="protein sequence ID" value="AFR93481.1"/>
    <property type="status" value="ALT_SEQ"/>
    <property type="molecule type" value="Genomic_DNA"/>
</dbReference>
<dbReference type="RefSeq" id="XP_012047592.1">
    <property type="nucleotide sequence ID" value="XM_012192202.1"/>
</dbReference>
<dbReference type="SMR" id="J9VJ99"/>
<dbReference type="GeneID" id="23887432"/>
<dbReference type="KEGG" id="cng:CNAG_03981"/>
<dbReference type="HOGENOM" id="CLU_027721_9_0_1"/>
<dbReference type="OrthoDB" id="7077at5206"/>
<dbReference type="PHI-base" id="PHI:4785"/>
<dbReference type="PHI-base" id="PHI:6585"/>
<dbReference type="Proteomes" id="UP000010091">
    <property type="component" value="Chromosome 2"/>
</dbReference>
<dbReference type="GO" id="GO:0005789">
    <property type="term" value="C:endoplasmic reticulum membrane"/>
    <property type="evidence" value="ECO:0007669"/>
    <property type="project" value="UniProtKB-SubCell"/>
</dbReference>
<dbReference type="GO" id="GO:0016409">
    <property type="term" value="F:palmitoyltransferase activity"/>
    <property type="evidence" value="ECO:0000315"/>
    <property type="project" value="UniProtKB"/>
</dbReference>
<dbReference type="GO" id="GO:0019706">
    <property type="term" value="F:protein-cysteine S-palmitoyltransferase activity"/>
    <property type="evidence" value="ECO:0007669"/>
    <property type="project" value="UniProtKB-UniRule"/>
</dbReference>
<dbReference type="GO" id="GO:0061951">
    <property type="term" value="P:establishment of protein localization to plasma membrane"/>
    <property type="evidence" value="ECO:0000315"/>
    <property type="project" value="UniProtKB"/>
</dbReference>
<dbReference type="HAMAP" id="MF_03199">
    <property type="entry name" value="DHHC_PAT_PFA4"/>
    <property type="match status" value="1"/>
</dbReference>
<dbReference type="InterPro" id="IPR001594">
    <property type="entry name" value="Palmitoyltrfase_DHHC"/>
</dbReference>
<dbReference type="InterPro" id="IPR033682">
    <property type="entry name" value="PFA4"/>
</dbReference>
<dbReference type="InterPro" id="IPR039859">
    <property type="entry name" value="PFA4/ZDH16/20/ERF2-like"/>
</dbReference>
<dbReference type="PANTHER" id="PTHR12246">
    <property type="entry name" value="PALMITOYLTRANSFERASE ZDHHC16"/>
    <property type="match status" value="1"/>
</dbReference>
<dbReference type="Pfam" id="PF01529">
    <property type="entry name" value="DHHC"/>
    <property type="match status" value="1"/>
</dbReference>
<dbReference type="PROSITE" id="PS50216">
    <property type="entry name" value="DHHC"/>
    <property type="match status" value="1"/>
</dbReference>
<name>PFA4_CRYNH</name>
<accession>J9VJ99</accession>
<reference key="1">
    <citation type="journal article" date="2014" name="PLoS Genet.">
        <title>Analysis of the genome and transcriptome of Cryptococcus neoformans var. grubii reveals complex RNA expression and microevolution leading to virulence attenuation.</title>
        <authorList>
            <person name="Janbon G."/>
            <person name="Ormerod K.L."/>
            <person name="Paulet D."/>
            <person name="Byrnes E.J. III"/>
            <person name="Yadav V."/>
            <person name="Chatterjee G."/>
            <person name="Mullapudi N."/>
            <person name="Hon C.-C."/>
            <person name="Billmyre R.B."/>
            <person name="Brunel F."/>
            <person name="Bahn Y.-S."/>
            <person name="Chen W."/>
            <person name="Chen Y."/>
            <person name="Chow E.W.L."/>
            <person name="Coppee J.-Y."/>
            <person name="Floyd-Averette A."/>
            <person name="Gaillardin C."/>
            <person name="Gerik K.J."/>
            <person name="Goldberg J."/>
            <person name="Gonzalez-Hilarion S."/>
            <person name="Gujja S."/>
            <person name="Hamlin J.L."/>
            <person name="Hsueh Y.-P."/>
            <person name="Ianiri G."/>
            <person name="Jones S."/>
            <person name="Kodira C.D."/>
            <person name="Kozubowski L."/>
            <person name="Lam W."/>
            <person name="Marra M."/>
            <person name="Mesner L.D."/>
            <person name="Mieczkowski P.A."/>
            <person name="Moyrand F."/>
            <person name="Nielsen K."/>
            <person name="Proux C."/>
            <person name="Rossignol T."/>
            <person name="Schein J.E."/>
            <person name="Sun S."/>
            <person name="Wollschlaeger C."/>
            <person name="Wood I.A."/>
            <person name="Zeng Q."/>
            <person name="Neuveglise C."/>
            <person name="Newlon C.S."/>
            <person name="Perfect J.R."/>
            <person name="Lodge J.K."/>
            <person name="Idnurm A."/>
            <person name="Stajich J.E."/>
            <person name="Kronstad J.W."/>
            <person name="Sanyal K."/>
            <person name="Heitman J."/>
            <person name="Fraser J.A."/>
            <person name="Cuomo C.A."/>
            <person name="Dietrich F.S."/>
        </authorList>
    </citation>
    <scope>NUCLEOTIDE SEQUENCE [LARGE SCALE GENOMIC DNA]</scope>
    <source>
        <strain>H99 / ATCC 208821 / CBS 10515 / FGSC 9487</strain>
    </source>
</reference>
<reference key="2">
    <citation type="journal article" date="2015" name="PLoS Pathog.">
        <title>A single protein S-acyl transferase acts through diverse substrates to determine cryptococcal morphology, stress tolerance, and pathogenic outcome.</title>
        <authorList>
            <person name="Santiago-Tirado F.H."/>
            <person name="Peng T."/>
            <person name="Yang M."/>
            <person name="Hang H.C."/>
            <person name="Doering T.L."/>
        </authorList>
    </citation>
    <scope>FUNCTION</scope>
    <scope>DISRUPTION PHENOTYPE</scope>
    <scope>MUTAGENESIS OF 124-HIS-CYS-125</scope>
    <source>
        <strain>H99 / ATCC 208821 / CBS 10515 / FGSC 9487</strain>
    </source>
</reference>
<sequence length="456" mass="52295">MAARNWSRVWVGGTVILISFIAFSSQIFVIWPWYGREISLDLLMLLVPLNLAAFMIFWNYRLCVITSPGTVPEGWRPNIGAMDGMEVKKGTHTPRYCKNCAHYKPPRAHHCRQCKTCWLKLDHHCPWIGNCVGFYNQGHFIRFLLWVDIGTTFHLIIMVRRVLYIAEYYHEPTLADVLFLVFNFATCVPVWLCVGMFSIYHVYLACGNSTTIEGWEKDKVATLIRRGKIKEVKYPYNIGIYKNIKSVLGPNPLLWLWPQKMQGDGLSFPVNPSAGDHMTQYFWPPQDPSRLPNPPPIPAHASPFVYGNNGFNPNLRPTNSLRARRSSTPRIDEDEYSHEQGRHYSSGDERDNGSISASSSPEPYLSDYDHYDEGPMYPGERMTTLVPRVRRGSEGWEVAPGGGWNAYAGMMDEEVGWDDEAGYDEAPGEDPYVERPWEMRGRYNVYDPEEESGYTH</sequence>
<gene>
    <name evidence="1 5" type="primary">PFA4</name>
    <name type="ORF">CNAG_03981</name>
</gene>
<feature type="chain" id="PRO_0000435134" description="Palmitoyltransferase PFA4">
    <location>
        <begin position="1"/>
        <end position="456"/>
    </location>
</feature>
<feature type="topological domain" description="Cytoplasmic" evidence="1">
    <location>
        <begin position="1"/>
        <end position="9"/>
    </location>
</feature>
<feature type="transmembrane region" description="Helical" evidence="1">
    <location>
        <begin position="10"/>
        <end position="30"/>
    </location>
</feature>
<feature type="topological domain" description="Lumenal" evidence="1">
    <location>
        <begin position="31"/>
        <end position="37"/>
    </location>
</feature>
<feature type="transmembrane region" description="Helical" evidence="1">
    <location>
        <begin position="38"/>
        <end position="58"/>
    </location>
</feature>
<feature type="topological domain" description="Cytoplasmic" evidence="1">
    <location>
        <begin position="59"/>
        <end position="138"/>
    </location>
</feature>
<feature type="transmembrane region" description="Helical" evidence="1">
    <location>
        <begin position="139"/>
        <end position="159"/>
    </location>
</feature>
<feature type="topological domain" description="Lumenal" evidence="1">
    <location>
        <begin position="160"/>
        <end position="176"/>
    </location>
</feature>
<feature type="transmembrane region" description="Helical" evidence="1">
    <location>
        <begin position="177"/>
        <end position="197"/>
    </location>
</feature>
<feature type="topological domain" description="Cytoplasmic" evidence="1">
    <location>
        <begin position="198"/>
        <end position="456"/>
    </location>
</feature>
<feature type="domain" description="DHHC" evidence="2">
    <location>
        <begin position="95"/>
        <end position="145"/>
    </location>
</feature>
<feature type="region of interest" description="Disordered" evidence="3">
    <location>
        <begin position="284"/>
        <end position="377"/>
    </location>
</feature>
<feature type="compositionally biased region" description="Pro residues" evidence="3">
    <location>
        <begin position="285"/>
        <end position="298"/>
    </location>
</feature>
<feature type="compositionally biased region" description="Polar residues" evidence="3">
    <location>
        <begin position="309"/>
        <end position="321"/>
    </location>
</feature>
<feature type="compositionally biased region" description="Basic and acidic residues" evidence="3">
    <location>
        <begin position="337"/>
        <end position="352"/>
    </location>
</feature>
<feature type="active site" description="S-palmitoyl cysteine intermediate" evidence="1">
    <location>
        <position position="125"/>
    </location>
</feature>
<feature type="mutagenesis site" description="Renders protein unable to complement a null mutant, probably due to a lack of PAT enzymatic activity." evidence="4">
    <original>HC</original>
    <variation>AS</variation>
    <location>
        <begin position="124"/>
        <end position="125"/>
    </location>
</feature>
<proteinExistence type="evidence at protein level"/>
<keyword id="KW-0012">Acyltransferase</keyword>
<keyword id="KW-0256">Endoplasmic reticulum</keyword>
<keyword id="KW-0449">Lipoprotein</keyword>
<keyword id="KW-0472">Membrane</keyword>
<keyword id="KW-0564">Palmitate</keyword>
<keyword id="KW-0808">Transferase</keyword>
<keyword id="KW-0812">Transmembrane</keyword>
<keyword id="KW-1133">Transmembrane helix</keyword>
<comment type="function">
    <text evidence="1 4">Mediates the reversible addition of palmitate to target proteins, thereby regulating their membrane association and biological function. Responsible for the modification of a subset of proteins that are critical in cryptococcal pathogenesis, with substrates involved in cell wall synthesis, signal transduction, and membrane trafficking. Palmitoylates chitin synthase CHS3.</text>
</comment>
<comment type="catalytic activity">
    <reaction evidence="1">
        <text>L-cysteinyl-[protein] + hexadecanoyl-CoA = S-hexadecanoyl-L-cysteinyl-[protein] + CoA</text>
        <dbReference type="Rhea" id="RHEA:36683"/>
        <dbReference type="Rhea" id="RHEA-COMP:10131"/>
        <dbReference type="Rhea" id="RHEA-COMP:11032"/>
        <dbReference type="ChEBI" id="CHEBI:29950"/>
        <dbReference type="ChEBI" id="CHEBI:57287"/>
        <dbReference type="ChEBI" id="CHEBI:57379"/>
        <dbReference type="ChEBI" id="CHEBI:74151"/>
        <dbReference type="EC" id="2.3.1.225"/>
    </reaction>
</comment>
<comment type="subcellular location">
    <subcellularLocation>
        <location evidence="1">Endoplasmic reticulum membrane</location>
        <topology evidence="1">Multi-pass membrane protein</topology>
    </subcellularLocation>
</comment>
<comment type="domain">
    <text evidence="1">The DHHC domain is required for palmitoyltransferase activity.</text>
</comment>
<comment type="disruption phenotype">
    <text evidence="4">Displays morphological changes and shows increases in adherence to and engulfment by host macrophages. Causes dramatic defects in cryptococcal morphology, stress tolerance, and virulence.</text>
</comment>
<comment type="similarity">
    <text evidence="1">Belongs to the DHHC palmitoyltransferase family. PFA4 subfamily.</text>
</comment>
<comment type="sequence caution" evidence="6">
    <conflict type="erroneous gene model prediction">
        <sequence resource="EMBL-CDS" id="AFR93481"/>
    </conflict>
</comment>
<organism>
    <name type="scientific">Cryptococcus neoformans var. grubii serotype A (strain H99 / ATCC 208821 / CBS 10515 / FGSC 9487)</name>
    <name type="common">Filobasidiella neoformans var. grubii</name>
    <dbReference type="NCBI Taxonomy" id="235443"/>
    <lineage>
        <taxon>Eukaryota</taxon>
        <taxon>Fungi</taxon>
        <taxon>Dikarya</taxon>
        <taxon>Basidiomycota</taxon>
        <taxon>Agaricomycotina</taxon>
        <taxon>Tremellomycetes</taxon>
        <taxon>Tremellales</taxon>
        <taxon>Cryptococcaceae</taxon>
        <taxon>Cryptococcus</taxon>
        <taxon>Cryptococcus neoformans species complex</taxon>
    </lineage>
</organism>
<protein>
    <recommendedName>
        <fullName evidence="1 6">Palmitoyltransferase PFA4</fullName>
        <ecNumber evidence="1">2.3.1.225</ecNumber>
    </recommendedName>
    <alternativeName>
        <fullName evidence="1 5">Protein S-acyltransferase</fullName>
        <shortName evidence="1">PAT</shortName>
    </alternativeName>
    <alternativeName>
        <fullName evidence="1">Protein fatty acyltransferase 4</fullName>
    </alternativeName>
</protein>
<evidence type="ECO:0000255" key="1">
    <source>
        <dbReference type="HAMAP-Rule" id="MF_03199"/>
    </source>
</evidence>
<evidence type="ECO:0000255" key="2">
    <source>
        <dbReference type="PROSITE-ProRule" id="PRU00067"/>
    </source>
</evidence>
<evidence type="ECO:0000256" key="3">
    <source>
        <dbReference type="SAM" id="MobiDB-lite"/>
    </source>
</evidence>
<evidence type="ECO:0000269" key="4">
    <source>
    </source>
</evidence>
<evidence type="ECO:0000303" key="5">
    <source>
    </source>
</evidence>
<evidence type="ECO:0000305" key="6">
    <source>
    </source>
</evidence>